<protein>
    <recommendedName>
        <fullName>Histone H3.3-like type 2</fullName>
    </recommendedName>
</protein>
<sequence length="136" mass="15349">MARTKQTARKSTGGKAPRKALATKAARKSAIVTGSVKKVHRFRPGTVALREIRRYQKSTELLLRKLPFQRLVREIAQDFKTDLRFQSAAIGALQEASEAYLVGLFEDTNLCAIHAKRVTIMPKDMQLARRIRGERS</sequence>
<reference key="1">
    <citation type="journal article" date="1998" name="Science">
        <title>Genome sequence of the nematode C. elegans: a platform for investigating biology.</title>
        <authorList>
            <consortium name="The C. elegans sequencing consortium"/>
        </authorList>
    </citation>
    <scope>NUCLEOTIDE SEQUENCE [LARGE SCALE GENOMIC DNA]</scope>
    <source>
        <strain>Bristol N2</strain>
    </source>
</reference>
<reference key="2">
    <citation type="journal article" date="2006" name="PLoS Genet.">
        <title>Histone H3.3 variant dynamics in the germline of Caenorhabditis elegans.</title>
        <authorList>
            <person name="Ooi S.L."/>
            <person name="Priess J.R."/>
            <person name="Henikoff S."/>
        </authorList>
    </citation>
    <scope>IDENTIFICATION</scope>
</reference>
<accession>Q27532</accession>
<feature type="initiator methionine" description="Removed" evidence="1">
    <location>
        <position position="1"/>
    </location>
</feature>
<feature type="chain" id="PRO_0000268634" description="Histone H3.3-like type 2">
    <location>
        <begin position="2"/>
        <end position="136"/>
    </location>
</feature>
<feature type="region of interest" description="Disordered" evidence="2">
    <location>
        <begin position="1"/>
        <end position="20"/>
    </location>
</feature>
<feature type="modified residue" description="N6-acetyllysine; alternate" evidence="1">
    <location>
        <position position="5"/>
    </location>
</feature>
<feature type="modified residue" description="N6-methylated lysine; alternate" evidence="1">
    <location>
        <position position="5"/>
    </location>
</feature>
<feature type="modified residue" description="N6-acetyllysine; alternate" evidence="1">
    <location>
        <position position="10"/>
    </location>
</feature>
<feature type="modified residue" description="N6-methylated lysine; alternate" evidence="1">
    <location>
        <position position="10"/>
    </location>
</feature>
<feature type="modified residue" description="Phosphoserine" evidence="1">
    <location>
        <position position="11"/>
    </location>
</feature>
<feature type="modified residue" description="N6-acetyllysine" evidence="1">
    <location>
        <position position="15"/>
    </location>
</feature>
<feature type="modified residue" description="N6-acetyllysine" evidence="1">
    <location>
        <position position="24"/>
    </location>
</feature>
<feature type="modified residue" description="N6-methylated lysine" evidence="1">
    <location>
        <position position="28"/>
    </location>
</feature>
<feature type="modified residue" description="Phosphoserine" evidence="1">
    <location>
        <position position="29"/>
    </location>
</feature>
<feature type="modified residue" description="N6-methylated lysine" evidence="1">
    <location>
        <position position="37"/>
    </location>
</feature>
<feature type="modified residue" description="N6-methylated lysine" evidence="1">
    <location>
        <position position="80"/>
    </location>
</feature>
<dbReference type="EMBL" id="Z74476">
    <property type="protein sequence ID" value="CAA98963.1"/>
    <property type="molecule type" value="Genomic_DNA"/>
</dbReference>
<dbReference type="PIR" id="T26178">
    <property type="entry name" value="T26178"/>
</dbReference>
<dbReference type="RefSeq" id="NP_506164.1">
    <property type="nucleotide sequence ID" value="NM_073763.5"/>
</dbReference>
<dbReference type="SMR" id="Q27532"/>
<dbReference type="BioGRID" id="44754">
    <property type="interactions" value="5"/>
</dbReference>
<dbReference type="DIP" id="DIP-24615N"/>
<dbReference type="FunCoup" id="Q27532">
    <property type="interactions" value="115"/>
</dbReference>
<dbReference type="STRING" id="6239.W05B10.1.1"/>
<dbReference type="PaxDb" id="6239-W05B10.1"/>
<dbReference type="PeptideAtlas" id="Q27532"/>
<dbReference type="EnsemblMetazoa" id="W05B10.1.1">
    <property type="protein sequence ID" value="W05B10.1.1"/>
    <property type="gene ID" value="WBGene00012276"/>
</dbReference>
<dbReference type="GeneID" id="179734"/>
<dbReference type="KEGG" id="cel:CELE_W05B10.1"/>
<dbReference type="UCSC" id="W05B10.1">
    <property type="organism name" value="c. elegans"/>
</dbReference>
<dbReference type="AGR" id="WB:WBGene00012276"/>
<dbReference type="CTD" id="179734"/>
<dbReference type="WormBase" id="W05B10.1">
    <property type="protein sequence ID" value="CE06544"/>
    <property type="gene ID" value="WBGene00012276"/>
    <property type="gene designation" value="his-74"/>
</dbReference>
<dbReference type="eggNOG" id="KOG1745">
    <property type="taxonomic scope" value="Eukaryota"/>
</dbReference>
<dbReference type="GeneTree" id="ENSGT01110000267215"/>
<dbReference type="HOGENOM" id="CLU_078295_4_0_1"/>
<dbReference type="InParanoid" id="Q27532"/>
<dbReference type="OMA" id="RRKKWAQ"/>
<dbReference type="OrthoDB" id="4025405at2759"/>
<dbReference type="PhylomeDB" id="Q27532"/>
<dbReference type="PRO" id="PR:Q27532"/>
<dbReference type="Proteomes" id="UP000001940">
    <property type="component" value="Chromosome V"/>
</dbReference>
<dbReference type="Bgee" id="WBGene00012276">
    <property type="expression patterns" value="Expressed in adult organism and 4 other cell types or tissues"/>
</dbReference>
<dbReference type="GO" id="GO:0000786">
    <property type="term" value="C:nucleosome"/>
    <property type="evidence" value="ECO:0007669"/>
    <property type="project" value="UniProtKB-KW"/>
</dbReference>
<dbReference type="GO" id="GO:0005634">
    <property type="term" value="C:nucleus"/>
    <property type="evidence" value="ECO:0000318"/>
    <property type="project" value="GO_Central"/>
</dbReference>
<dbReference type="GO" id="GO:0003677">
    <property type="term" value="F:DNA binding"/>
    <property type="evidence" value="ECO:0007669"/>
    <property type="project" value="UniProtKB-KW"/>
</dbReference>
<dbReference type="GO" id="GO:0046982">
    <property type="term" value="F:protein heterodimerization activity"/>
    <property type="evidence" value="ECO:0007669"/>
    <property type="project" value="InterPro"/>
</dbReference>
<dbReference type="GO" id="GO:0030527">
    <property type="term" value="F:structural constituent of chromatin"/>
    <property type="evidence" value="ECO:0007669"/>
    <property type="project" value="InterPro"/>
</dbReference>
<dbReference type="CDD" id="cd22911">
    <property type="entry name" value="HFD_H3"/>
    <property type="match status" value="1"/>
</dbReference>
<dbReference type="FunFam" id="1.10.20.10:FF:000001">
    <property type="entry name" value="Histone H3"/>
    <property type="match status" value="1"/>
</dbReference>
<dbReference type="Gene3D" id="1.10.20.10">
    <property type="entry name" value="Histone, subunit A"/>
    <property type="match status" value="1"/>
</dbReference>
<dbReference type="InterPro" id="IPR009072">
    <property type="entry name" value="Histone-fold"/>
</dbReference>
<dbReference type="InterPro" id="IPR007125">
    <property type="entry name" value="Histone_H2A/H2B/H3"/>
</dbReference>
<dbReference type="InterPro" id="IPR000164">
    <property type="entry name" value="Histone_H3/CENP-A"/>
</dbReference>
<dbReference type="PANTHER" id="PTHR11426">
    <property type="entry name" value="HISTONE H3"/>
    <property type="match status" value="1"/>
</dbReference>
<dbReference type="Pfam" id="PF00125">
    <property type="entry name" value="Histone"/>
    <property type="match status" value="1"/>
</dbReference>
<dbReference type="PRINTS" id="PR00622">
    <property type="entry name" value="HISTONEH3"/>
</dbReference>
<dbReference type="SMART" id="SM00428">
    <property type="entry name" value="H3"/>
    <property type="match status" value="1"/>
</dbReference>
<dbReference type="SUPFAM" id="SSF47113">
    <property type="entry name" value="Histone-fold"/>
    <property type="match status" value="1"/>
</dbReference>
<dbReference type="PROSITE" id="PS00959">
    <property type="entry name" value="HISTONE_H3_2"/>
    <property type="match status" value="1"/>
</dbReference>
<gene>
    <name type="primary">his-74</name>
    <name type="ORF">W05B10.1</name>
</gene>
<comment type="function">
    <text evidence="1">Putative variant histone H3 which may replace conventional H3 in a subset of nucleosomes. Nucleosomes wrap and compact DNA into chromatin, limiting DNA accessibility to the cellular machineries which require DNA as a template. Histones thereby play a central role in transcription regulation, DNA repair, DNA replication and chromosomal stability. DNA accessibility is regulated via a complex set of post-translational modifications of histones, also called histone code, and nucleosome remodeling (By similarity).</text>
</comment>
<comment type="subunit">
    <text evidence="1">The nucleosome is a histone octamer containing two molecules each of H2A, H2B, H3 and H4 assembled in one H3-H4 heterotetramer and two H2A-H2B heterodimers. The octamer wraps approximately 147 bp of DNA (By similarity).</text>
</comment>
<comment type="subcellular location">
    <subcellularLocation>
        <location evidence="1">Nucleus</location>
    </subcellularLocation>
    <subcellularLocation>
        <location evidence="1">Chromosome</location>
    </subcellularLocation>
</comment>
<comment type="PTM">
    <text evidence="1">Acetylation is generally linked to gene activation.</text>
</comment>
<comment type="PTM">
    <text evidence="1">Methylation at Lys-5 is linked to gene activation. Methylation at Lys-10 is linked to gene repression (By similarity).</text>
</comment>
<comment type="similarity">
    <text evidence="3">Belongs to the histone H3 family.</text>
</comment>
<keyword id="KW-0007">Acetylation</keyword>
<keyword id="KW-0158">Chromosome</keyword>
<keyword id="KW-0238">DNA-binding</keyword>
<keyword id="KW-0488">Methylation</keyword>
<keyword id="KW-0544">Nucleosome core</keyword>
<keyword id="KW-0539">Nucleus</keyword>
<keyword id="KW-0597">Phosphoprotein</keyword>
<keyword id="KW-1185">Reference proteome</keyword>
<proteinExistence type="inferred from homology"/>
<name>H33L2_CAEEL</name>
<organism>
    <name type="scientific">Caenorhabditis elegans</name>
    <dbReference type="NCBI Taxonomy" id="6239"/>
    <lineage>
        <taxon>Eukaryota</taxon>
        <taxon>Metazoa</taxon>
        <taxon>Ecdysozoa</taxon>
        <taxon>Nematoda</taxon>
        <taxon>Chromadorea</taxon>
        <taxon>Rhabditida</taxon>
        <taxon>Rhabditina</taxon>
        <taxon>Rhabditomorpha</taxon>
        <taxon>Rhabditoidea</taxon>
        <taxon>Rhabditidae</taxon>
        <taxon>Peloderinae</taxon>
        <taxon>Caenorhabditis</taxon>
    </lineage>
</organism>
<evidence type="ECO:0000250" key="1"/>
<evidence type="ECO:0000256" key="2">
    <source>
        <dbReference type="SAM" id="MobiDB-lite"/>
    </source>
</evidence>
<evidence type="ECO:0000305" key="3"/>